<evidence type="ECO:0000255" key="1">
    <source>
        <dbReference type="HAMAP-Rule" id="MF_00569"/>
    </source>
</evidence>
<sequence length="368" mass="41641">MSILEKVQPIETMLPERYYTMSTEDMEKRVREIKEKMGETLFIPGHHYQKDEVVQFSDAAGDSLQLAQVAASNKKAKYIVFCGVHFMAETADMLTTDDQIVILPDMRAGCSMADMADIEQTERAWKELTKLFGDTMIPLTYVNSTAAIKAFCGRNGGATVTSSNAKQMVSWAFTQKERLVFLPDQHLGRNTTYDLGIPLDKMAVWDPYTDSLEYEGDIEEIQVILWKGHCSVHQNFTVKNIENVRKNQPDMNIIVHPECCYEVVAASDYAGSTKYIIDMIEAAPSGSKWAIGTEMNLVNRIIQQHPDKEIVSLNPFMCPCLTMNRIDLPHLLWALETIEKGEEINVISVDKQVTEEAVLALNRMLERV</sequence>
<dbReference type="EC" id="2.5.1.72" evidence="1"/>
<dbReference type="EMBL" id="AE017194">
    <property type="protein sequence ID" value="AAS43414.1"/>
    <property type="molecule type" value="Genomic_DNA"/>
</dbReference>
<dbReference type="SMR" id="Q730A4"/>
<dbReference type="KEGG" id="bca:BCE_4513"/>
<dbReference type="HOGENOM" id="CLU_047382_2_0_9"/>
<dbReference type="UniPathway" id="UPA00253">
    <property type="reaction ID" value="UER00327"/>
</dbReference>
<dbReference type="Proteomes" id="UP000002527">
    <property type="component" value="Chromosome"/>
</dbReference>
<dbReference type="GO" id="GO:0005829">
    <property type="term" value="C:cytosol"/>
    <property type="evidence" value="ECO:0007669"/>
    <property type="project" value="TreeGrafter"/>
</dbReference>
<dbReference type="GO" id="GO:0051539">
    <property type="term" value="F:4 iron, 4 sulfur cluster binding"/>
    <property type="evidence" value="ECO:0007669"/>
    <property type="project" value="UniProtKB-KW"/>
</dbReference>
<dbReference type="GO" id="GO:0046872">
    <property type="term" value="F:metal ion binding"/>
    <property type="evidence" value="ECO:0007669"/>
    <property type="project" value="UniProtKB-KW"/>
</dbReference>
<dbReference type="GO" id="GO:0008987">
    <property type="term" value="F:quinolinate synthetase A activity"/>
    <property type="evidence" value="ECO:0007669"/>
    <property type="project" value="UniProtKB-UniRule"/>
</dbReference>
<dbReference type="GO" id="GO:0034628">
    <property type="term" value="P:'de novo' NAD biosynthetic process from L-aspartate"/>
    <property type="evidence" value="ECO:0007669"/>
    <property type="project" value="TreeGrafter"/>
</dbReference>
<dbReference type="FunFam" id="3.40.50.10800:FF:000001">
    <property type="entry name" value="Quinolinate synthase A"/>
    <property type="match status" value="1"/>
</dbReference>
<dbReference type="Gene3D" id="3.40.50.10800">
    <property type="entry name" value="NadA-like"/>
    <property type="match status" value="3"/>
</dbReference>
<dbReference type="HAMAP" id="MF_00569">
    <property type="entry name" value="NadA_type3"/>
    <property type="match status" value="1"/>
</dbReference>
<dbReference type="InterPro" id="IPR003473">
    <property type="entry name" value="NadA"/>
</dbReference>
<dbReference type="InterPro" id="IPR036094">
    <property type="entry name" value="NadA_sf"/>
</dbReference>
<dbReference type="InterPro" id="IPR023515">
    <property type="entry name" value="Quinolinate_synth_A_type3"/>
</dbReference>
<dbReference type="NCBIfam" id="TIGR00550">
    <property type="entry name" value="nadA"/>
    <property type="match status" value="1"/>
</dbReference>
<dbReference type="NCBIfam" id="NF006880">
    <property type="entry name" value="PRK09375.2-1"/>
    <property type="match status" value="1"/>
</dbReference>
<dbReference type="NCBIfam" id="NF006883">
    <property type="entry name" value="PRK09375.2-4"/>
    <property type="match status" value="1"/>
</dbReference>
<dbReference type="PANTHER" id="PTHR30573:SF0">
    <property type="entry name" value="QUINOLINATE SYNTHASE, CHLOROPLASTIC"/>
    <property type="match status" value="1"/>
</dbReference>
<dbReference type="PANTHER" id="PTHR30573">
    <property type="entry name" value="QUINOLINATE SYNTHETASE A"/>
    <property type="match status" value="1"/>
</dbReference>
<dbReference type="Pfam" id="PF02445">
    <property type="entry name" value="NadA"/>
    <property type="match status" value="1"/>
</dbReference>
<dbReference type="SUPFAM" id="SSF142754">
    <property type="entry name" value="NadA-like"/>
    <property type="match status" value="1"/>
</dbReference>
<comment type="function">
    <text evidence="1">Catalyzes the condensation of iminoaspartate with dihydroxyacetone phosphate to form quinolinate.</text>
</comment>
<comment type="catalytic activity">
    <reaction evidence="1">
        <text>iminosuccinate + dihydroxyacetone phosphate = quinolinate + phosphate + 2 H2O + H(+)</text>
        <dbReference type="Rhea" id="RHEA:25888"/>
        <dbReference type="ChEBI" id="CHEBI:15377"/>
        <dbReference type="ChEBI" id="CHEBI:15378"/>
        <dbReference type="ChEBI" id="CHEBI:29959"/>
        <dbReference type="ChEBI" id="CHEBI:43474"/>
        <dbReference type="ChEBI" id="CHEBI:57642"/>
        <dbReference type="ChEBI" id="CHEBI:77875"/>
        <dbReference type="EC" id="2.5.1.72"/>
    </reaction>
    <physiologicalReaction direction="left-to-right" evidence="1">
        <dbReference type="Rhea" id="RHEA:25889"/>
    </physiologicalReaction>
</comment>
<comment type="cofactor">
    <cofactor evidence="1">
        <name>[4Fe-4S] cluster</name>
        <dbReference type="ChEBI" id="CHEBI:49883"/>
    </cofactor>
    <text evidence="1">Binds 1 [4Fe-4S] cluster per subunit.</text>
</comment>
<comment type="pathway">
    <text evidence="1">Cofactor biosynthesis; NAD(+) biosynthesis; quinolinate from iminoaspartate: step 1/1.</text>
</comment>
<comment type="subcellular location">
    <subcellularLocation>
        <location evidence="1">Cytoplasm</location>
    </subcellularLocation>
</comment>
<comment type="similarity">
    <text evidence="1">Belongs to the quinolinate synthase family. Type 3 subfamily.</text>
</comment>
<protein>
    <recommendedName>
        <fullName evidence="1">Quinolinate synthase</fullName>
        <ecNumber evidence="1">2.5.1.72</ecNumber>
    </recommendedName>
</protein>
<name>NADA_BACC1</name>
<gene>
    <name evidence="1" type="primary">nadA</name>
    <name type="ordered locus">BCE_4513</name>
</gene>
<reference key="1">
    <citation type="journal article" date="2004" name="Nucleic Acids Res.">
        <title>The genome sequence of Bacillus cereus ATCC 10987 reveals metabolic adaptations and a large plasmid related to Bacillus anthracis pXO1.</title>
        <authorList>
            <person name="Rasko D.A."/>
            <person name="Ravel J."/>
            <person name="Oekstad O.A."/>
            <person name="Helgason E."/>
            <person name="Cer R.Z."/>
            <person name="Jiang L."/>
            <person name="Shores K.A."/>
            <person name="Fouts D.E."/>
            <person name="Tourasse N.J."/>
            <person name="Angiuoli S.V."/>
            <person name="Kolonay J.F."/>
            <person name="Nelson W.C."/>
            <person name="Kolstoe A.-B."/>
            <person name="Fraser C.M."/>
            <person name="Read T.D."/>
        </authorList>
    </citation>
    <scope>NUCLEOTIDE SEQUENCE [LARGE SCALE GENOMIC DNA]</scope>
    <source>
        <strain>ATCC 10987 / NRS 248</strain>
    </source>
</reference>
<proteinExistence type="inferred from homology"/>
<feature type="chain" id="PRO_1000024985" description="Quinolinate synthase">
    <location>
        <begin position="1"/>
        <end position="368"/>
    </location>
</feature>
<feature type="binding site" evidence="1">
    <location>
        <position position="46"/>
    </location>
    <ligand>
        <name>iminosuccinate</name>
        <dbReference type="ChEBI" id="CHEBI:77875"/>
    </ligand>
</feature>
<feature type="binding site" evidence="1">
    <location>
        <position position="63"/>
    </location>
    <ligand>
        <name>iminosuccinate</name>
        <dbReference type="ChEBI" id="CHEBI:77875"/>
    </ligand>
</feature>
<feature type="binding site" evidence="1">
    <location>
        <position position="110"/>
    </location>
    <ligand>
        <name>[4Fe-4S] cluster</name>
        <dbReference type="ChEBI" id="CHEBI:49883"/>
    </ligand>
</feature>
<feature type="binding site" evidence="1">
    <location>
        <begin position="141"/>
        <end position="143"/>
    </location>
    <ligand>
        <name>iminosuccinate</name>
        <dbReference type="ChEBI" id="CHEBI:77875"/>
    </ligand>
</feature>
<feature type="binding site" evidence="1">
    <location>
        <position position="162"/>
    </location>
    <ligand>
        <name>iminosuccinate</name>
        <dbReference type="ChEBI" id="CHEBI:77875"/>
    </ligand>
</feature>
<feature type="binding site" evidence="1">
    <location>
        <position position="230"/>
    </location>
    <ligand>
        <name>[4Fe-4S] cluster</name>
        <dbReference type="ChEBI" id="CHEBI:49883"/>
    </ligand>
</feature>
<feature type="binding site" evidence="1">
    <location>
        <begin position="256"/>
        <end position="258"/>
    </location>
    <ligand>
        <name>iminosuccinate</name>
        <dbReference type="ChEBI" id="CHEBI:77875"/>
    </ligand>
</feature>
<feature type="binding site" evidence="1">
    <location>
        <position position="273"/>
    </location>
    <ligand>
        <name>iminosuccinate</name>
        <dbReference type="ChEBI" id="CHEBI:77875"/>
    </ligand>
</feature>
<feature type="binding site" evidence="1">
    <location>
        <position position="320"/>
    </location>
    <ligand>
        <name>[4Fe-4S] cluster</name>
        <dbReference type="ChEBI" id="CHEBI:49883"/>
    </ligand>
</feature>
<organism>
    <name type="scientific">Bacillus cereus (strain ATCC 10987 / NRS 248)</name>
    <dbReference type="NCBI Taxonomy" id="222523"/>
    <lineage>
        <taxon>Bacteria</taxon>
        <taxon>Bacillati</taxon>
        <taxon>Bacillota</taxon>
        <taxon>Bacilli</taxon>
        <taxon>Bacillales</taxon>
        <taxon>Bacillaceae</taxon>
        <taxon>Bacillus</taxon>
        <taxon>Bacillus cereus group</taxon>
    </lineage>
</organism>
<keyword id="KW-0004">4Fe-4S</keyword>
<keyword id="KW-0963">Cytoplasm</keyword>
<keyword id="KW-0408">Iron</keyword>
<keyword id="KW-0411">Iron-sulfur</keyword>
<keyword id="KW-0479">Metal-binding</keyword>
<keyword id="KW-0662">Pyridine nucleotide biosynthesis</keyword>
<keyword id="KW-0808">Transferase</keyword>
<accession>Q730A4</accession>